<keyword id="KW-0012">Acyltransferase</keyword>
<keyword id="KW-0963">Cytoplasm</keyword>
<keyword id="KW-0408">Iron</keyword>
<keyword id="KW-0479">Metal-binding</keyword>
<keyword id="KW-1185">Reference proteome</keyword>
<keyword id="KW-0808">Transferase</keyword>
<keyword id="KW-0819">tRNA processing</keyword>
<evidence type="ECO:0000255" key="1">
    <source>
        <dbReference type="HAMAP-Rule" id="MF_01445"/>
    </source>
</evidence>
<reference key="1">
    <citation type="journal article" date="2003" name="J. Bacteriol.">
        <title>Complete genome sequence of the ammonia-oxidizing bacterium and obligate chemolithoautotroph Nitrosomonas europaea.</title>
        <authorList>
            <person name="Chain P."/>
            <person name="Lamerdin J.E."/>
            <person name="Larimer F.W."/>
            <person name="Regala W."/>
            <person name="Lao V."/>
            <person name="Land M.L."/>
            <person name="Hauser L."/>
            <person name="Hooper A.B."/>
            <person name="Klotz M.G."/>
            <person name="Norton J."/>
            <person name="Sayavedra-Soto L.A."/>
            <person name="Arciero D.M."/>
            <person name="Hommes N.G."/>
            <person name="Whittaker M.M."/>
            <person name="Arp D.J."/>
        </authorList>
    </citation>
    <scope>NUCLEOTIDE SEQUENCE [LARGE SCALE GENOMIC DNA]</scope>
    <source>
        <strain>ATCC 19718 / CIP 103999 / KCTC 2705 / NBRC 14298</strain>
    </source>
</reference>
<name>TSAD_NITEU</name>
<feature type="chain" id="PRO_0000303456" description="tRNA N6-adenosine threonylcarbamoyltransferase">
    <location>
        <begin position="1"/>
        <end position="337"/>
    </location>
</feature>
<feature type="binding site" evidence="1">
    <location>
        <position position="111"/>
    </location>
    <ligand>
        <name>Fe cation</name>
        <dbReference type="ChEBI" id="CHEBI:24875"/>
    </ligand>
</feature>
<feature type="binding site" evidence="1">
    <location>
        <position position="115"/>
    </location>
    <ligand>
        <name>Fe cation</name>
        <dbReference type="ChEBI" id="CHEBI:24875"/>
    </ligand>
</feature>
<feature type="binding site" evidence="1">
    <location>
        <begin position="134"/>
        <end position="138"/>
    </location>
    <ligand>
        <name>substrate</name>
    </ligand>
</feature>
<feature type="binding site" evidence="1">
    <location>
        <position position="167"/>
    </location>
    <ligand>
        <name>substrate</name>
    </ligand>
</feature>
<feature type="binding site" evidence="1">
    <location>
        <position position="180"/>
    </location>
    <ligand>
        <name>substrate</name>
    </ligand>
</feature>
<feature type="binding site" evidence="1">
    <location>
        <position position="272"/>
    </location>
    <ligand>
        <name>substrate</name>
    </ligand>
</feature>
<feature type="binding site" evidence="1">
    <location>
        <position position="300"/>
    </location>
    <ligand>
        <name>Fe cation</name>
        <dbReference type="ChEBI" id="CHEBI:24875"/>
    </ligand>
</feature>
<sequence>MLVLGIETSCDETGVALYDTCQGLLGHTLYSQVDMHREYGGVVPELASRDHIRRILPLIRQLFRQSDTSLESVDAIACTQGPGLAGALLTGASFSSALAFARNIPVLNIHHLEGHLLSPLLSDPAPDFPFVALLVSGGHTQLMRVDGIGQYRLLGETVDDAAGEAFDKTAKLLDLDYPGGKLLAELATQGRAEQFRLPRPMLNSNDLNFSFSGLKTAAALLIGKHEMNSQTRADIAFAFEDAVTDVLVKKSVTALNITGLQQLVVAGGVGANSRLRQKLLHHLSGTDITVFFPALEFCTDNGAMIALAGALRLQQLDERLRAGGSFTVKARWNLEDL</sequence>
<gene>
    <name evidence="1" type="primary">tsaD</name>
    <name type="synonym">gcp</name>
    <name type="ordered locus">NE0225</name>
</gene>
<protein>
    <recommendedName>
        <fullName evidence="1">tRNA N6-adenosine threonylcarbamoyltransferase</fullName>
        <ecNumber evidence="1">2.3.1.234</ecNumber>
    </recommendedName>
    <alternativeName>
        <fullName evidence="1">N6-L-threonylcarbamoyladenine synthase</fullName>
        <shortName evidence="1">t(6)A synthase</shortName>
    </alternativeName>
    <alternativeName>
        <fullName evidence="1">t(6)A37 threonylcarbamoyladenosine biosynthesis protein TsaD</fullName>
    </alternativeName>
    <alternativeName>
        <fullName evidence="1">tRNA threonylcarbamoyladenosine biosynthesis protein TsaD</fullName>
    </alternativeName>
</protein>
<dbReference type="EC" id="2.3.1.234" evidence="1"/>
<dbReference type="EMBL" id="AL954747">
    <property type="protein sequence ID" value="CAD84136.1"/>
    <property type="molecule type" value="Genomic_DNA"/>
</dbReference>
<dbReference type="RefSeq" id="WP_011110870.1">
    <property type="nucleotide sequence ID" value="NC_004757.1"/>
</dbReference>
<dbReference type="SMR" id="Q82XN2"/>
<dbReference type="STRING" id="228410.NE0225"/>
<dbReference type="GeneID" id="87103432"/>
<dbReference type="KEGG" id="neu:NE0225"/>
<dbReference type="eggNOG" id="COG0533">
    <property type="taxonomic scope" value="Bacteria"/>
</dbReference>
<dbReference type="HOGENOM" id="CLU_023208_0_2_4"/>
<dbReference type="OrthoDB" id="9806197at2"/>
<dbReference type="PhylomeDB" id="Q82XN2"/>
<dbReference type="Proteomes" id="UP000001416">
    <property type="component" value="Chromosome"/>
</dbReference>
<dbReference type="GO" id="GO:0005737">
    <property type="term" value="C:cytoplasm"/>
    <property type="evidence" value="ECO:0007669"/>
    <property type="project" value="UniProtKB-SubCell"/>
</dbReference>
<dbReference type="GO" id="GO:0005506">
    <property type="term" value="F:iron ion binding"/>
    <property type="evidence" value="ECO:0007669"/>
    <property type="project" value="UniProtKB-UniRule"/>
</dbReference>
<dbReference type="GO" id="GO:0061711">
    <property type="term" value="F:N(6)-L-threonylcarbamoyladenine synthase activity"/>
    <property type="evidence" value="ECO:0007669"/>
    <property type="project" value="UniProtKB-EC"/>
</dbReference>
<dbReference type="GO" id="GO:0002949">
    <property type="term" value="P:tRNA threonylcarbamoyladenosine modification"/>
    <property type="evidence" value="ECO:0007669"/>
    <property type="project" value="UniProtKB-UniRule"/>
</dbReference>
<dbReference type="CDD" id="cd24133">
    <property type="entry name" value="ASKHA_NBD_TsaD_bac"/>
    <property type="match status" value="1"/>
</dbReference>
<dbReference type="FunFam" id="3.30.420.40:FF:000012">
    <property type="entry name" value="tRNA N6-adenosine threonylcarbamoyltransferase"/>
    <property type="match status" value="1"/>
</dbReference>
<dbReference type="FunFam" id="3.30.420.40:FF:000040">
    <property type="entry name" value="tRNA N6-adenosine threonylcarbamoyltransferase"/>
    <property type="match status" value="1"/>
</dbReference>
<dbReference type="Gene3D" id="3.30.420.40">
    <property type="match status" value="2"/>
</dbReference>
<dbReference type="HAMAP" id="MF_01445">
    <property type="entry name" value="TsaD"/>
    <property type="match status" value="1"/>
</dbReference>
<dbReference type="InterPro" id="IPR043129">
    <property type="entry name" value="ATPase_NBD"/>
</dbReference>
<dbReference type="InterPro" id="IPR000905">
    <property type="entry name" value="Gcp-like_dom"/>
</dbReference>
<dbReference type="InterPro" id="IPR017861">
    <property type="entry name" value="KAE1/TsaD"/>
</dbReference>
<dbReference type="InterPro" id="IPR022450">
    <property type="entry name" value="TsaD"/>
</dbReference>
<dbReference type="NCBIfam" id="TIGR00329">
    <property type="entry name" value="gcp_kae1"/>
    <property type="match status" value="1"/>
</dbReference>
<dbReference type="NCBIfam" id="TIGR03723">
    <property type="entry name" value="T6A_TsaD_YgjD"/>
    <property type="match status" value="1"/>
</dbReference>
<dbReference type="PANTHER" id="PTHR11735">
    <property type="entry name" value="TRNA N6-ADENOSINE THREONYLCARBAMOYLTRANSFERASE"/>
    <property type="match status" value="1"/>
</dbReference>
<dbReference type="PANTHER" id="PTHR11735:SF6">
    <property type="entry name" value="TRNA N6-ADENOSINE THREONYLCARBAMOYLTRANSFERASE, MITOCHONDRIAL"/>
    <property type="match status" value="1"/>
</dbReference>
<dbReference type="Pfam" id="PF00814">
    <property type="entry name" value="TsaD"/>
    <property type="match status" value="1"/>
</dbReference>
<dbReference type="PRINTS" id="PR00789">
    <property type="entry name" value="OSIALOPTASE"/>
</dbReference>
<dbReference type="SUPFAM" id="SSF53067">
    <property type="entry name" value="Actin-like ATPase domain"/>
    <property type="match status" value="2"/>
</dbReference>
<comment type="function">
    <text evidence="1">Required for the formation of a threonylcarbamoyl group on adenosine at position 37 (t(6)A37) in tRNAs that read codons beginning with adenine. Is involved in the transfer of the threonylcarbamoyl moiety of threonylcarbamoyl-AMP (TC-AMP) to the N6 group of A37, together with TsaE and TsaB. TsaD likely plays a direct catalytic role in this reaction.</text>
</comment>
<comment type="catalytic activity">
    <reaction evidence="1">
        <text>L-threonylcarbamoyladenylate + adenosine(37) in tRNA = N(6)-L-threonylcarbamoyladenosine(37) in tRNA + AMP + H(+)</text>
        <dbReference type="Rhea" id="RHEA:37059"/>
        <dbReference type="Rhea" id="RHEA-COMP:10162"/>
        <dbReference type="Rhea" id="RHEA-COMP:10163"/>
        <dbReference type="ChEBI" id="CHEBI:15378"/>
        <dbReference type="ChEBI" id="CHEBI:73682"/>
        <dbReference type="ChEBI" id="CHEBI:74411"/>
        <dbReference type="ChEBI" id="CHEBI:74418"/>
        <dbReference type="ChEBI" id="CHEBI:456215"/>
        <dbReference type="EC" id="2.3.1.234"/>
    </reaction>
</comment>
<comment type="cofactor">
    <cofactor evidence="1">
        <name>Fe(2+)</name>
        <dbReference type="ChEBI" id="CHEBI:29033"/>
    </cofactor>
    <text evidence="1">Binds 1 Fe(2+) ion per subunit.</text>
</comment>
<comment type="subcellular location">
    <subcellularLocation>
        <location evidence="1">Cytoplasm</location>
    </subcellularLocation>
</comment>
<comment type="similarity">
    <text evidence="1">Belongs to the KAE1 / TsaD family.</text>
</comment>
<organism>
    <name type="scientific">Nitrosomonas europaea (strain ATCC 19718 / CIP 103999 / KCTC 2705 / NBRC 14298)</name>
    <dbReference type="NCBI Taxonomy" id="228410"/>
    <lineage>
        <taxon>Bacteria</taxon>
        <taxon>Pseudomonadati</taxon>
        <taxon>Pseudomonadota</taxon>
        <taxon>Betaproteobacteria</taxon>
        <taxon>Nitrosomonadales</taxon>
        <taxon>Nitrosomonadaceae</taxon>
        <taxon>Nitrosomonas</taxon>
    </lineage>
</organism>
<accession>Q82XN2</accession>
<proteinExistence type="inferred from homology"/>